<keyword id="KW-0025">Alternative splicing</keyword>
<keyword id="KW-1003">Cell membrane</keyword>
<keyword id="KW-0903">Direct protein sequencing</keyword>
<keyword id="KW-1015">Disulfide bond</keyword>
<keyword id="KW-0325">Glycoprotein</keyword>
<keyword id="KW-0393">Immunoglobulin domain</keyword>
<keyword id="KW-0472">Membrane</keyword>
<keyword id="KW-1185">Reference proteome</keyword>
<keyword id="KW-0732">Signal</keyword>
<keyword id="KW-0812">Transmembrane</keyword>
<keyword id="KW-1133">Transmembrane helix</keyword>
<sequence length="200" mass="22529">MKPYFSCVFVFCFLIKLLTGELNDLANHRMFSFHDGGVQISCNYPETVQQLKMQLFKDREVLCDLTKTKGSGNTVSIKNPMSCPYQLSNNSVSFFLDNADSSQGSYFLCSLSIFDPPPFQEKNLSGGYLLIYESQLCCQLKLWLPVGCAAFVAALLFGCIFIVWFAKKKYRSSVHDPNSEYMFMAAVNTNKKSRLAGMTS</sequence>
<dbReference type="EMBL" id="AB023133">
    <property type="protein sequence ID" value="BAA82127.1"/>
    <property type="molecule type" value="mRNA"/>
</dbReference>
<dbReference type="EMBL" id="AB023134">
    <property type="protein sequence ID" value="BAA82128.1"/>
    <property type="molecule type" value="mRNA"/>
</dbReference>
<dbReference type="PIR" id="JC7396">
    <property type="entry name" value="JC7396"/>
</dbReference>
<dbReference type="PIR" id="JC7397">
    <property type="entry name" value="JC7397"/>
</dbReference>
<dbReference type="RefSeq" id="NP_001418747.1">
    <molecule id="Q9R1T7-1"/>
    <property type="nucleotide sequence ID" value="NM_001431818.1"/>
</dbReference>
<dbReference type="RefSeq" id="NP_072132.1">
    <molecule id="Q9R1T7-1"/>
    <property type="nucleotide sequence ID" value="NM_022610.3"/>
</dbReference>
<dbReference type="RefSeq" id="XP_006245099.1">
    <molecule id="Q9R1T7-2"/>
    <property type="nucleotide sequence ID" value="XM_006245037.5"/>
</dbReference>
<dbReference type="RefSeq" id="XP_006245100.1">
    <property type="nucleotide sequence ID" value="XM_006245038.3"/>
</dbReference>
<dbReference type="RefSeq" id="XP_008765358.1">
    <molecule id="Q9R1T7-2"/>
    <property type="nucleotide sequence ID" value="XM_008767136.4"/>
</dbReference>
<dbReference type="RefSeq" id="XP_017452114.1">
    <property type="nucleotide sequence ID" value="XM_017596625.1"/>
</dbReference>
<dbReference type="SMR" id="Q9R1T7"/>
<dbReference type="FunCoup" id="Q9R1T7">
    <property type="interactions" value="166"/>
</dbReference>
<dbReference type="STRING" id="10116.ENSRNOP00000064455"/>
<dbReference type="GlyCosmos" id="Q9R1T7">
    <property type="glycosylation" value="2 sites, No reported glycans"/>
</dbReference>
<dbReference type="GlyGen" id="Q9R1T7">
    <property type="glycosylation" value="2 sites"/>
</dbReference>
<dbReference type="PhosphoSitePlus" id="Q9R1T7"/>
<dbReference type="PaxDb" id="10116-ENSRNOP00000064455"/>
<dbReference type="Ensembl" id="ENSRNOT00000071226.3">
    <molecule id="Q9R1T7-1"/>
    <property type="protein sequence ID" value="ENSRNOP00000064455.1"/>
    <property type="gene ID" value="ENSRNOG00000046196.3"/>
</dbReference>
<dbReference type="GeneID" id="64545"/>
<dbReference type="KEGG" id="rno:64545"/>
<dbReference type="AGR" id="RGD:620123"/>
<dbReference type="CTD" id="29851"/>
<dbReference type="RGD" id="620123">
    <property type="gene designation" value="Icos"/>
</dbReference>
<dbReference type="eggNOG" id="ENOG502S59F">
    <property type="taxonomic scope" value="Eukaryota"/>
</dbReference>
<dbReference type="GeneTree" id="ENSGT00390000000801"/>
<dbReference type="HOGENOM" id="CLU_1315009_0_0_1"/>
<dbReference type="InParanoid" id="Q9R1T7"/>
<dbReference type="OrthoDB" id="69807at9989"/>
<dbReference type="PhylomeDB" id="Q9R1T7"/>
<dbReference type="Reactome" id="R-RNO-1257604">
    <property type="pathway name" value="PIP3 activates AKT signaling"/>
</dbReference>
<dbReference type="Reactome" id="R-RNO-6811558">
    <property type="pathway name" value="PI5P, PP2A and IER3 Regulate PI3K/AKT Signaling"/>
</dbReference>
<dbReference type="Reactome" id="R-RNO-9927354">
    <property type="pathway name" value="Co-stimulation by ICOS"/>
</dbReference>
<dbReference type="PRO" id="PR:Q9R1T7"/>
<dbReference type="Proteomes" id="UP000002494">
    <property type="component" value="Chromosome 9"/>
</dbReference>
<dbReference type="Bgee" id="ENSRNOG00000046196">
    <property type="expression patterns" value="Expressed in thymus and 16 other cell types or tissues"/>
</dbReference>
<dbReference type="ExpressionAtlas" id="Q9R1T7">
    <property type="expression patterns" value="baseline and differential"/>
</dbReference>
<dbReference type="GO" id="GO:0009897">
    <property type="term" value="C:external side of plasma membrane"/>
    <property type="evidence" value="ECO:0000266"/>
    <property type="project" value="RGD"/>
</dbReference>
<dbReference type="GO" id="GO:0005886">
    <property type="term" value="C:plasma membrane"/>
    <property type="evidence" value="ECO:0000266"/>
    <property type="project" value="RGD"/>
</dbReference>
<dbReference type="GO" id="GO:0038023">
    <property type="term" value="F:signaling receptor activity"/>
    <property type="evidence" value="ECO:0000266"/>
    <property type="project" value="RGD"/>
</dbReference>
<dbReference type="GO" id="GO:0098609">
    <property type="term" value="P:cell-cell adhesion"/>
    <property type="evidence" value="ECO:0000314"/>
    <property type="project" value="RGD"/>
</dbReference>
<dbReference type="GO" id="GO:0031295">
    <property type="term" value="P:T cell costimulation"/>
    <property type="evidence" value="ECO:0000314"/>
    <property type="project" value="RGD"/>
</dbReference>
<dbReference type="GO" id="GO:0002517">
    <property type="term" value="P:T cell tolerance induction"/>
    <property type="evidence" value="ECO:0000315"/>
    <property type="project" value="RGD"/>
</dbReference>
<dbReference type="GO" id="GO:0061470">
    <property type="term" value="P:T follicular helper cell differentiation"/>
    <property type="evidence" value="ECO:0000266"/>
    <property type="project" value="RGD"/>
</dbReference>
<dbReference type="FunFam" id="2.60.40.10:FF:000874">
    <property type="entry name" value="Inducible T-cell costimulator"/>
    <property type="match status" value="1"/>
</dbReference>
<dbReference type="Gene3D" id="2.60.40.10">
    <property type="entry name" value="Immunoglobulins"/>
    <property type="match status" value="1"/>
</dbReference>
<dbReference type="InterPro" id="IPR039943">
    <property type="entry name" value="ICOS"/>
</dbReference>
<dbReference type="InterPro" id="IPR013783">
    <property type="entry name" value="Ig-like_fold"/>
</dbReference>
<dbReference type="InterPro" id="IPR013106">
    <property type="entry name" value="Ig_V-set"/>
</dbReference>
<dbReference type="PANTHER" id="PTHR20904:SF0">
    <property type="entry name" value="INDUCIBLE T-CELL COSTIMULATOR"/>
    <property type="match status" value="1"/>
</dbReference>
<dbReference type="PANTHER" id="PTHR20904">
    <property type="entry name" value="INDUCIBLE T-CELL COSTIMULATOR ICOS"/>
    <property type="match status" value="1"/>
</dbReference>
<dbReference type="Pfam" id="PF15910">
    <property type="entry name" value="V-set_2"/>
    <property type="match status" value="1"/>
</dbReference>
<comment type="function">
    <text evidence="1 2">Stimulatory receptor expressed in activated or antigen-experienced T-cells that plays an important role in the immune response. Upon binding to its ligand ICOSL expressed on antigen presenting cells (APCs), delivers costimulatory signals that enhances all basic T-cell responses to a foreign antigen, namely proliferation, secretion of lymphokines including IL10, up-regulation of molecules that mediate cell-cell interaction, and effective help for antibody secretion by B-cells. Also acts as a costimulatory receptor critical for the differentiation of T follicular regulatory cells upon immune challenges such as viral infection (By similarity). Mechanistically, potentiates TCR-induced calcium flux by augmenting PLCG1 activation and actin remodeling (By similarity). In addition, activates PI3K signaling pathways independently of calcium flux (By similarity). Essential both for efficient interaction between T and B-cells and for normal antibody responses to T-cell dependent antigens. Prevents the apoptosis of pre-activated T-cells. Plays a critical role in CD40-mediated class switching of immunoglobin isotypes (By similarity).</text>
</comment>
<comment type="subunit">
    <text evidence="2">Homodimer; disulfide-linked. Interacts with ICOSLG. Interacts with PIK3R1. Interacts with TBK1; this interaction is critical for the maturation of T follicular regulatory cells.</text>
</comment>
<comment type="subcellular location">
    <subcellularLocation>
        <location evidence="2">Cell membrane</location>
        <topology evidence="2">Single-pass type I membrane protein</topology>
    </subcellularLocation>
</comment>
<comment type="alternative products">
    <event type="alternative splicing"/>
    <isoform>
        <id>Q9R1T7-1</id>
        <name>1</name>
        <name>AILIM-1</name>
        <sequence type="displayed"/>
    </isoform>
    <isoform>
        <id>Q9R1T7-2</id>
        <name>2</name>
        <name>AILIM-2</name>
        <sequence type="described" ref="VSP_010789"/>
    </isoform>
</comment>
<comment type="tissue specificity">
    <text evidence="4">Strongly expressed in the spleen and lung. Lower expression seen in liver, kidney and testis.</text>
</comment>
<comment type="induction">
    <text evidence="4">Expression on T-cells is drastically induced by phorbol myristate acetate (PMA) and Ca-ionophore or the engagement of CD3 and CD28.</text>
</comment>
<comment type="PTM">
    <text evidence="2">N-glycosylated.</text>
</comment>
<reference key="1">
    <citation type="journal article" date="2000" name="Biochem. Biophys. Res. Commun.">
        <title>Identification and characterization of rat AILIM/ICOS, a novel T-cell costimulatory molecule, related to the CD28/CTLA4 family.</title>
        <authorList>
            <person name="Tezuka K."/>
            <person name="Tsuji T."/>
            <person name="Hirano D."/>
            <person name="Tamatani T."/>
            <person name="Sakamaki K."/>
            <person name="Kobayashi Y."/>
            <person name="Kamada M."/>
        </authorList>
    </citation>
    <scope>NUCLEOTIDE SEQUENCE [MRNA] (ISOFORMS 1 AND 2)</scope>
    <scope>PROTEIN SEQUENCE OF 21-40</scope>
    <scope>FUNCTION</scope>
    <scope>SUBUNIT</scope>
    <scope>INDUCTION</scope>
    <scope>TISSUE SPECIFICITY</scope>
    <source>
        <tissue>Spleen</tissue>
    </source>
</reference>
<proteinExistence type="evidence at protein level"/>
<accession>Q9R1T7</accession>
<accession>Q9WVR9</accession>
<protein>
    <recommendedName>
        <fullName>Inducible T-cell costimulator</fullName>
    </recommendedName>
    <alternativeName>
        <fullName>Activation-inducible lymphocyte immunomediatory molecule</fullName>
    </alternativeName>
    <cdAntigenName>CD278</cdAntigenName>
</protein>
<evidence type="ECO:0000250" key="1">
    <source>
        <dbReference type="UniProtKB" id="Q9WVS0"/>
    </source>
</evidence>
<evidence type="ECO:0000250" key="2">
    <source>
        <dbReference type="UniProtKB" id="Q9Y6W8"/>
    </source>
</evidence>
<evidence type="ECO:0000255" key="3"/>
<evidence type="ECO:0000269" key="4">
    <source>
    </source>
</evidence>
<evidence type="ECO:0000303" key="5">
    <source>
    </source>
</evidence>
<feature type="signal peptide" evidence="4">
    <location>
        <begin position="1"/>
        <end position="20"/>
    </location>
</feature>
<feature type="chain" id="PRO_0000014808" description="Inducible T-cell costimulator">
    <location>
        <begin position="21"/>
        <end position="200"/>
    </location>
</feature>
<feature type="topological domain" description="Extracellular" evidence="3">
    <location>
        <begin position="21"/>
        <end position="145"/>
    </location>
</feature>
<feature type="transmembrane region" description="Helical" evidence="3">
    <location>
        <begin position="146"/>
        <end position="166"/>
    </location>
</feature>
<feature type="topological domain" description="Cytoplasmic" evidence="3">
    <location>
        <begin position="167"/>
        <end position="200"/>
    </location>
</feature>
<feature type="domain" description="Ig-like V-type">
    <location>
        <begin position="30"/>
        <end position="133"/>
    </location>
</feature>
<feature type="glycosylation site" description="N-linked (GlcNAc...) asparagine" evidence="2">
    <location>
        <position position="89"/>
    </location>
</feature>
<feature type="glycosylation site" description="N-linked (GlcNAc...) asparagine" evidence="3">
    <location>
        <position position="123"/>
    </location>
</feature>
<feature type="disulfide bond" evidence="2">
    <location>
        <begin position="42"/>
        <end position="109"/>
    </location>
</feature>
<feature type="disulfide bond" evidence="2">
    <location>
        <begin position="63"/>
        <end position="83"/>
    </location>
</feature>
<feature type="splice variant" id="VSP_010789" description="In isoform 2." evidence="5">
    <original>MTS</original>
    <variation>TAPLRALGRGEHSSCQDRN</variation>
    <location>
        <begin position="198"/>
        <end position="200"/>
    </location>
</feature>
<name>ICOS_RAT</name>
<organism>
    <name type="scientific">Rattus norvegicus</name>
    <name type="common">Rat</name>
    <dbReference type="NCBI Taxonomy" id="10116"/>
    <lineage>
        <taxon>Eukaryota</taxon>
        <taxon>Metazoa</taxon>
        <taxon>Chordata</taxon>
        <taxon>Craniata</taxon>
        <taxon>Vertebrata</taxon>
        <taxon>Euteleostomi</taxon>
        <taxon>Mammalia</taxon>
        <taxon>Eutheria</taxon>
        <taxon>Euarchontoglires</taxon>
        <taxon>Glires</taxon>
        <taxon>Rodentia</taxon>
        <taxon>Myomorpha</taxon>
        <taxon>Muroidea</taxon>
        <taxon>Muridae</taxon>
        <taxon>Murinae</taxon>
        <taxon>Rattus</taxon>
    </lineage>
</organism>
<gene>
    <name type="primary">Icos</name>
    <name type="synonym">Ailim</name>
</gene>